<gene>
    <name type="ordered locus">XF_1908</name>
</gene>
<protein>
    <recommendedName>
        <fullName evidence="1">Probable Fe(2+)-trafficking protein</fullName>
    </recommendedName>
</protein>
<name>FETP_XYLFA</name>
<accession>Q9PC73</accession>
<reference key="1">
    <citation type="journal article" date="2000" name="Nature">
        <title>The genome sequence of the plant pathogen Xylella fastidiosa.</title>
        <authorList>
            <person name="Simpson A.J.G."/>
            <person name="Reinach F.C."/>
            <person name="Arruda P."/>
            <person name="Abreu F.A."/>
            <person name="Acencio M."/>
            <person name="Alvarenga R."/>
            <person name="Alves L.M.C."/>
            <person name="Araya J.E."/>
            <person name="Baia G.S."/>
            <person name="Baptista C.S."/>
            <person name="Barros M.H."/>
            <person name="Bonaccorsi E.D."/>
            <person name="Bordin S."/>
            <person name="Bove J.M."/>
            <person name="Briones M.R.S."/>
            <person name="Bueno M.R.P."/>
            <person name="Camargo A.A."/>
            <person name="Camargo L.E.A."/>
            <person name="Carraro D.M."/>
            <person name="Carrer H."/>
            <person name="Colauto N.B."/>
            <person name="Colombo C."/>
            <person name="Costa F.F."/>
            <person name="Costa M.C.R."/>
            <person name="Costa-Neto C.M."/>
            <person name="Coutinho L.L."/>
            <person name="Cristofani M."/>
            <person name="Dias-Neto E."/>
            <person name="Docena C."/>
            <person name="El-Dorry H."/>
            <person name="Facincani A.P."/>
            <person name="Ferreira A.J.S."/>
            <person name="Ferreira V.C.A."/>
            <person name="Ferro J.A."/>
            <person name="Fraga J.S."/>
            <person name="Franca S.C."/>
            <person name="Franco M.C."/>
            <person name="Frohme M."/>
            <person name="Furlan L.R."/>
            <person name="Garnier M."/>
            <person name="Goldman G.H."/>
            <person name="Goldman M.H.S."/>
            <person name="Gomes S.L."/>
            <person name="Gruber A."/>
            <person name="Ho P.L."/>
            <person name="Hoheisel J.D."/>
            <person name="Junqueira M.L."/>
            <person name="Kemper E.L."/>
            <person name="Kitajima J.P."/>
            <person name="Krieger J.E."/>
            <person name="Kuramae E.E."/>
            <person name="Laigret F."/>
            <person name="Lambais M.R."/>
            <person name="Leite L.C.C."/>
            <person name="Lemos E.G.M."/>
            <person name="Lemos M.V.F."/>
            <person name="Lopes S.A."/>
            <person name="Lopes C.R."/>
            <person name="Machado J.A."/>
            <person name="Machado M.A."/>
            <person name="Madeira A.M.B.N."/>
            <person name="Madeira H.M.F."/>
            <person name="Marino C.L."/>
            <person name="Marques M.V."/>
            <person name="Martins E.A.L."/>
            <person name="Martins E.M.F."/>
            <person name="Matsukuma A.Y."/>
            <person name="Menck C.F.M."/>
            <person name="Miracca E.C."/>
            <person name="Miyaki C.Y."/>
            <person name="Monteiro-Vitorello C.B."/>
            <person name="Moon D.H."/>
            <person name="Nagai M.A."/>
            <person name="Nascimento A.L.T.O."/>
            <person name="Netto L.E.S."/>
            <person name="Nhani A. Jr."/>
            <person name="Nobrega F.G."/>
            <person name="Nunes L.R."/>
            <person name="Oliveira M.A."/>
            <person name="de Oliveira M.C."/>
            <person name="de Oliveira R.C."/>
            <person name="Palmieri D.A."/>
            <person name="Paris A."/>
            <person name="Peixoto B.R."/>
            <person name="Pereira G.A.G."/>
            <person name="Pereira H.A. Jr."/>
            <person name="Pesquero J.B."/>
            <person name="Quaggio R.B."/>
            <person name="Roberto P.G."/>
            <person name="Rodrigues V."/>
            <person name="de Rosa A.J.M."/>
            <person name="de Rosa V.E. Jr."/>
            <person name="de Sa R.G."/>
            <person name="Santelli R.V."/>
            <person name="Sawasaki H.E."/>
            <person name="da Silva A.C.R."/>
            <person name="da Silva A.M."/>
            <person name="da Silva F.R."/>
            <person name="Silva W.A. Jr."/>
            <person name="da Silveira J.F."/>
            <person name="Silvestri M.L.Z."/>
            <person name="Siqueira W.J."/>
            <person name="de Souza A.A."/>
            <person name="de Souza A.P."/>
            <person name="Terenzi M.F."/>
            <person name="Truffi D."/>
            <person name="Tsai S.M."/>
            <person name="Tsuhako M.H."/>
            <person name="Vallada H."/>
            <person name="Van Sluys M.A."/>
            <person name="Verjovski-Almeida S."/>
            <person name="Vettore A.L."/>
            <person name="Zago M.A."/>
            <person name="Zatz M."/>
            <person name="Meidanis J."/>
            <person name="Setubal J.C."/>
        </authorList>
    </citation>
    <scope>NUCLEOTIDE SEQUENCE [LARGE SCALE GENOMIC DNA]</scope>
    <source>
        <strain>9a5c</strain>
    </source>
</reference>
<dbReference type="EMBL" id="AE003849">
    <property type="protein sequence ID" value="AAF84714.1"/>
    <property type="status" value="ALT_INIT"/>
    <property type="molecule type" value="Genomic_DNA"/>
</dbReference>
<dbReference type="PIR" id="C82624">
    <property type="entry name" value="C82624"/>
</dbReference>
<dbReference type="RefSeq" id="WP_031337777.1">
    <property type="nucleotide sequence ID" value="NC_002488.3"/>
</dbReference>
<dbReference type="SMR" id="Q9PC73"/>
<dbReference type="STRING" id="160492.XF_1908"/>
<dbReference type="KEGG" id="xfa:XF_1908"/>
<dbReference type="eggNOG" id="COG2924">
    <property type="taxonomic scope" value="Bacteria"/>
</dbReference>
<dbReference type="HOGENOM" id="CLU_170994_0_0_6"/>
<dbReference type="Proteomes" id="UP000000812">
    <property type="component" value="Chromosome"/>
</dbReference>
<dbReference type="GO" id="GO:0005829">
    <property type="term" value="C:cytosol"/>
    <property type="evidence" value="ECO:0007669"/>
    <property type="project" value="TreeGrafter"/>
</dbReference>
<dbReference type="GO" id="GO:0005506">
    <property type="term" value="F:iron ion binding"/>
    <property type="evidence" value="ECO:0007669"/>
    <property type="project" value="UniProtKB-UniRule"/>
</dbReference>
<dbReference type="GO" id="GO:0034599">
    <property type="term" value="P:cellular response to oxidative stress"/>
    <property type="evidence" value="ECO:0007669"/>
    <property type="project" value="TreeGrafter"/>
</dbReference>
<dbReference type="FunFam" id="1.10.3880.10:FF:000001">
    <property type="entry name" value="Probable Fe(2+)-trafficking protein"/>
    <property type="match status" value="1"/>
</dbReference>
<dbReference type="Gene3D" id="1.10.3880.10">
    <property type="entry name" value="Fe(II) trafficking protein YggX"/>
    <property type="match status" value="1"/>
</dbReference>
<dbReference type="HAMAP" id="MF_00686">
    <property type="entry name" value="Fe_traffic_YggX"/>
    <property type="match status" value="1"/>
</dbReference>
<dbReference type="InterPro" id="IPR007457">
    <property type="entry name" value="Fe_traffick_prot_YggX"/>
</dbReference>
<dbReference type="InterPro" id="IPR036766">
    <property type="entry name" value="Fe_traffick_prot_YggX_sf"/>
</dbReference>
<dbReference type="NCBIfam" id="NF003817">
    <property type="entry name" value="PRK05408.1"/>
    <property type="match status" value="1"/>
</dbReference>
<dbReference type="PANTHER" id="PTHR36965">
    <property type="entry name" value="FE(2+)-TRAFFICKING PROTEIN-RELATED"/>
    <property type="match status" value="1"/>
</dbReference>
<dbReference type="PANTHER" id="PTHR36965:SF1">
    <property type="entry name" value="FE(2+)-TRAFFICKING PROTEIN-RELATED"/>
    <property type="match status" value="1"/>
</dbReference>
<dbReference type="Pfam" id="PF04362">
    <property type="entry name" value="Iron_traffic"/>
    <property type="match status" value="1"/>
</dbReference>
<dbReference type="PIRSF" id="PIRSF029827">
    <property type="entry name" value="Fe_traffic_YggX"/>
    <property type="match status" value="1"/>
</dbReference>
<dbReference type="SUPFAM" id="SSF111148">
    <property type="entry name" value="YggX-like"/>
    <property type="match status" value="1"/>
</dbReference>
<organism>
    <name type="scientific">Xylella fastidiosa (strain 9a5c)</name>
    <dbReference type="NCBI Taxonomy" id="160492"/>
    <lineage>
        <taxon>Bacteria</taxon>
        <taxon>Pseudomonadati</taxon>
        <taxon>Pseudomonadota</taxon>
        <taxon>Gammaproteobacteria</taxon>
        <taxon>Lysobacterales</taxon>
        <taxon>Lysobacteraceae</taxon>
        <taxon>Xylella</taxon>
    </lineage>
</organism>
<proteinExistence type="inferred from homology"/>
<comment type="function">
    <text evidence="1">Could be a mediator in iron transactions between iron acquisition and iron-requiring processes, such as synthesis and/or repair of Fe-S clusters in biosynthetic enzymes.</text>
</comment>
<comment type="similarity">
    <text evidence="1">Belongs to the Fe(2+)-trafficking protein family.</text>
</comment>
<comment type="sequence caution" evidence="2">
    <conflict type="erroneous initiation">
        <sequence resource="EMBL-CDS" id="AAF84714"/>
    </conflict>
</comment>
<feature type="chain" id="PRO_0000214517" description="Probable Fe(2+)-trafficking protein">
    <location>
        <begin position="1"/>
        <end position="90"/>
    </location>
</feature>
<keyword id="KW-0408">Iron</keyword>
<evidence type="ECO:0000255" key="1">
    <source>
        <dbReference type="HAMAP-Rule" id="MF_00686"/>
    </source>
</evidence>
<evidence type="ECO:0000305" key="2"/>
<sequence>MQRIIFCEYEQRDTEGLDFVPYPGELGQKIFACIGKVGWAAWLVHQTMLINENRLSPRNPSHRAFLEEELNKFLFERRVAKPEGYIEPDA</sequence>